<organism>
    <name type="scientific">Gemmatimonas aurantiaca (strain DSM 14586 / JCM 11422 / NBRC 100505 / T-27)</name>
    <dbReference type="NCBI Taxonomy" id="379066"/>
    <lineage>
        <taxon>Bacteria</taxon>
        <taxon>Pseudomonadati</taxon>
        <taxon>Gemmatimonadota</taxon>
        <taxon>Gemmatimonadia</taxon>
        <taxon>Gemmatimonadales</taxon>
        <taxon>Gemmatimonadaceae</taxon>
        <taxon>Gemmatimonas</taxon>
    </lineage>
</organism>
<proteinExistence type="inferred from homology"/>
<gene>
    <name evidence="1" type="primary">rpmA</name>
    <name type="ordered locus">GAU_1698</name>
</gene>
<sequence>MAHKKGVGSSRNGRDSNPKYRGIKKYGGEFVTAGNIILRQCGTKWHPGSNVGMGTDYTIYSLVDGVVQFAHKSKKAYKVNVVPVEYVEVEIEEVVEA</sequence>
<evidence type="ECO:0000255" key="1">
    <source>
        <dbReference type="HAMAP-Rule" id="MF_00539"/>
    </source>
</evidence>
<evidence type="ECO:0000256" key="2">
    <source>
        <dbReference type="SAM" id="MobiDB-lite"/>
    </source>
</evidence>
<evidence type="ECO:0000305" key="3"/>
<protein>
    <recommendedName>
        <fullName evidence="1">Large ribosomal subunit protein bL27</fullName>
    </recommendedName>
    <alternativeName>
        <fullName evidence="3">50S ribosomal protein L27</fullName>
    </alternativeName>
</protein>
<feature type="chain" id="PRO_1000211929" description="Large ribosomal subunit protein bL27">
    <location>
        <begin position="1"/>
        <end position="97"/>
    </location>
</feature>
<feature type="region of interest" description="Disordered" evidence="2">
    <location>
        <begin position="1"/>
        <end position="21"/>
    </location>
</feature>
<accession>C1A930</accession>
<name>RL27_GEMAT</name>
<keyword id="KW-1185">Reference proteome</keyword>
<keyword id="KW-0687">Ribonucleoprotein</keyword>
<keyword id="KW-0689">Ribosomal protein</keyword>
<comment type="similarity">
    <text evidence="1">Belongs to the bacterial ribosomal protein bL27 family.</text>
</comment>
<reference key="1">
    <citation type="submission" date="2006-03" db="EMBL/GenBank/DDBJ databases">
        <title>Complete genome sequence of Gemmatimonas aurantiaca T-27 that represents a novel phylum Gemmatimonadetes.</title>
        <authorList>
            <person name="Takasaki K."/>
            <person name="Ichikawa N."/>
            <person name="Miura H."/>
            <person name="Matsushita S."/>
            <person name="Watanabe Y."/>
            <person name="Oguchi A."/>
            <person name="Ankai A."/>
            <person name="Yashiro I."/>
            <person name="Takahashi M."/>
            <person name="Terui Y."/>
            <person name="Fukui S."/>
            <person name="Yokoyama H."/>
            <person name="Tanikawa S."/>
            <person name="Hanada S."/>
            <person name="Kamagata Y."/>
            <person name="Fujita N."/>
        </authorList>
    </citation>
    <scope>NUCLEOTIDE SEQUENCE [LARGE SCALE GENOMIC DNA]</scope>
    <source>
        <strain>DSM 14586 / JCM 11422 / NBRC 100505 / T-27</strain>
    </source>
</reference>
<dbReference type="EMBL" id="AP009153">
    <property type="protein sequence ID" value="BAH38740.1"/>
    <property type="molecule type" value="Genomic_DNA"/>
</dbReference>
<dbReference type="RefSeq" id="WP_012683187.1">
    <property type="nucleotide sequence ID" value="NC_012489.1"/>
</dbReference>
<dbReference type="SMR" id="C1A930"/>
<dbReference type="STRING" id="379066.GAU_1698"/>
<dbReference type="KEGG" id="gau:GAU_1698"/>
<dbReference type="eggNOG" id="COG0211">
    <property type="taxonomic scope" value="Bacteria"/>
</dbReference>
<dbReference type="HOGENOM" id="CLU_095424_4_0_0"/>
<dbReference type="OrthoDB" id="9803474at2"/>
<dbReference type="Proteomes" id="UP000002209">
    <property type="component" value="Chromosome"/>
</dbReference>
<dbReference type="GO" id="GO:0022625">
    <property type="term" value="C:cytosolic large ribosomal subunit"/>
    <property type="evidence" value="ECO:0007669"/>
    <property type="project" value="TreeGrafter"/>
</dbReference>
<dbReference type="GO" id="GO:0003735">
    <property type="term" value="F:structural constituent of ribosome"/>
    <property type="evidence" value="ECO:0007669"/>
    <property type="project" value="InterPro"/>
</dbReference>
<dbReference type="GO" id="GO:0006412">
    <property type="term" value="P:translation"/>
    <property type="evidence" value="ECO:0007669"/>
    <property type="project" value="UniProtKB-UniRule"/>
</dbReference>
<dbReference type="FunFam" id="2.40.50.100:FF:000060">
    <property type="entry name" value="Apicoplast ribosomal protein L27"/>
    <property type="match status" value="1"/>
</dbReference>
<dbReference type="Gene3D" id="2.40.50.100">
    <property type="match status" value="1"/>
</dbReference>
<dbReference type="HAMAP" id="MF_00539">
    <property type="entry name" value="Ribosomal_bL27"/>
    <property type="match status" value="1"/>
</dbReference>
<dbReference type="InterPro" id="IPR001684">
    <property type="entry name" value="Ribosomal_bL27"/>
</dbReference>
<dbReference type="NCBIfam" id="TIGR00062">
    <property type="entry name" value="L27"/>
    <property type="match status" value="1"/>
</dbReference>
<dbReference type="PANTHER" id="PTHR15893:SF0">
    <property type="entry name" value="LARGE RIBOSOMAL SUBUNIT PROTEIN BL27M"/>
    <property type="match status" value="1"/>
</dbReference>
<dbReference type="PANTHER" id="PTHR15893">
    <property type="entry name" value="RIBOSOMAL PROTEIN L27"/>
    <property type="match status" value="1"/>
</dbReference>
<dbReference type="Pfam" id="PF01016">
    <property type="entry name" value="Ribosomal_L27"/>
    <property type="match status" value="1"/>
</dbReference>
<dbReference type="PRINTS" id="PR00063">
    <property type="entry name" value="RIBOSOMALL27"/>
</dbReference>
<dbReference type="SUPFAM" id="SSF110324">
    <property type="entry name" value="Ribosomal L27 protein-like"/>
    <property type="match status" value="1"/>
</dbReference>